<proteinExistence type="evidence at protein level"/>
<comment type="function">
    <text evidence="2">Single-stranded structure-specific DNA endonuclease involved in DNA excision repair. Makes the 3'incision in DNA nucleotide excision repair (NER). Binds and bends DNA repair bubble substrate and breaks base stacking at the single-strand/double-strand DNA junction of the DNA bubble. Plays a role in base excision repair (BER) by promoting the binding of DNA glycosylase NTHL1 to its substrate and increasing NTHL1 catalytic activity that removes oxidized pyrimidines from DNA. Involved in transcription-coupled nucleotide excision repair (TCR) which allows RNA polymerase II-blocking lesions to be rapidly removed from the transcribed strand of active genes. Functions during the initial step of TCR in cooperation with ERCC6/CSB to recognized stalled RNA polymerase II. Also, stimulates ERCC6/CSB binding to the DNA repair bubble and ERCC6/CSB ATPase activity. Required for DNA replication fork maintenance and preservation of genomic stability. Involved in homologous recombination repair (HRR) induced by DNA replication stress by recruiting RAD51, BRCA2, and PALB2 to the damaged DNA site. During HRR, binds to the replication fork with high specificity and stabilizes it. Also, acts upstream of HRR, to promote the release of BRCA1 from DNA.</text>
</comment>
<comment type="cofactor">
    <cofactor evidence="2">
        <name>Mg(2+)</name>
        <dbReference type="ChEBI" id="CHEBI:18420"/>
    </cofactor>
    <text evidence="1">Binds 2 magnesium ions per subunit. They probably participate in the reaction catalyzed by the enzyme. May bind an additional third magnesium ion after substrate binding.</text>
</comment>
<comment type="subunit">
    <text evidence="2">Monomer. Homodimer. Component of the homologous recombination repair (HR) complex composed of ERCC5/XPG, BRCA2, PALB2, DSS1 and RAD51. Within the complex, interacts with BRCA2 and PALB2. Interacts with RNA polymerase II. Interacts (via C-terminus) with ERCC6/CSB; the interaction stimulates ERCC6/CSB binding to the DNA repair bubble and ERCC6/CSB ATPase activity. May form a complex composed of RNA polymerase II, ERCC6/CSB and ERCC5/XPG which associates with the DNA repair bubble during transcription-coupled nucleotide excision repair. Interacts with BRCA1; the interaction promotes the release of BRCA1 from DNA. Interacts with PCNA. Interacts with NTHL1; the interaction stimulates NTHL1 activity and NTHL1 binding to its DNA substrate.</text>
</comment>
<comment type="subcellular location">
    <subcellularLocation>
        <location evidence="2">Nucleus</location>
    </subcellularLocation>
    <subcellularLocation>
        <location evidence="2">Chromosome</location>
    </subcellularLocation>
    <text evidence="2">Colocalizes with RAD51 to nuclear foci in S phase. Localizes to DNA double-strand breaks (DBS) during replication stress. Colocalizes with BRCA2 to nuclear foci following DNA replication stress.</text>
</comment>
<comment type="domain">
    <text evidence="2">Both nuclear localization signals 1 and 2 act as a monopartite signal which binds to the high affinity site on KPNA2/importin-alpha.</text>
</comment>
<comment type="domain">
    <text evidence="2">Both the spacer region (also known as the recognition (R) domain) and C-terminal domain are required for stable binding to the DNA repair bubble. However, both domains are dispensable for incision of DNA bubble structures.</text>
</comment>
<comment type="similarity">
    <text evidence="5">Belongs to the XPG/RAD2 endonuclease family. XPG subfamily.</text>
</comment>
<feature type="chain" id="PRO_0000154032" description="DNA excision repair protein ERCC-5">
    <location>
        <begin position="1"/>
        <end position="1170"/>
    </location>
</feature>
<feature type="region of interest" description="N-domain" evidence="2">
    <location>
        <begin position="1"/>
        <end position="78"/>
    </location>
</feature>
<feature type="region of interest" description="DNA-binding; may bind to the undamaged single-strand DNA of the DNA repair bubble" evidence="2">
    <location>
        <begin position="31"/>
        <end position="67"/>
    </location>
</feature>
<feature type="region of interest" description="Spacer region" evidence="2">
    <location>
        <begin position="79"/>
        <end position="784"/>
    </location>
</feature>
<feature type="region of interest" description="Disordered" evidence="4">
    <location>
        <begin position="304"/>
        <end position="479"/>
    </location>
</feature>
<feature type="region of interest" description="Disordered" evidence="4">
    <location>
        <begin position="520"/>
        <end position="587"/>
    </location>
</feature>
<feature type="region of interest" description="Disordered" evidence="4">
    <location>
        <begin position="600"/>
        <end position="701"/>
    </location>
</feature>
<feature type="region of interest" description="I-domain" evidence="2">
    <location>
        <begin position="785"/>
        <end position="880"/>
    </location>
</feature>
<feature type="region of interest" description="DNA-binding; may bind to the undamaged single-strand DNA of the DNA repair bubble" evidence="2">
    <location>
        <begin position="819"/>
        <end position="835"/>
    </location>
</feature>
<feature type="region of interest" description="DNA-binding; H2TH (helix-2turn-helix) motif which binds double-stranded DNA" evidence="2">
    <location>
        <begin position="847"/>
        <end position="879"/>
    </location>
</feature>
<feature type="region of interest" description="DNA-binding; may bind double-stranded DNA" evidence="2">
    <location>
        <begin position="911"/>
        <end position="917"/>
    </location>
</feature>
<feature type="region of interest" description="Interaction with PCNA" evidence="2">
    <location>
        <begin position="980"/>
        <end position="1008"/>
    </location>
</feature>
<feature type="region of interest" description="Interaction with ERCC6/CSB" evidence="2">
    <location>
        <begin position="1010"/>
        <end position="1170"/>
    </location>
</feature>
<feature type="region of interest" description="Disordered" evidence="4">
    <location>
        <begin position="1033"/>
        <end position="1146"/>
    </location>
</feature>
<feature type="short sequence motif" description="Nuclear localization signal 1" evidence="2">
    <location>
        <begin position="1049"/>
        <end position="1065"/>
    </location>
</feature>
<feature type="short sequence motif" description="Nuclear localization signal 2" evidence="2">
    <location>
        <begin position="1153"/>
        <end position="1170"/>
    </location>
</feature>
<feature type="compositionally biased region" description="Low complexity" evidence="4">
    <location>
        <begin position="306"/>
        <end position="323"/>
    </location>
</feature>
<feature type="compositionally biased region" description="Basic and acidic residues" evidence="4">
    <location>
        <begin position="324"/>
        <end position="336"/>
    </location>
</feature>
<feature type="compositionally biased region" description="Basic and acidic residues" evidence="4">
    <location>
        <begin position="363"/>
        <end position="373"/>
    </location>
</feature>
<feature type="compositionally biased region" description="Polar residues" evidence="4">
    <location>
        <begin position="455"/>
        <end position="474"/>
    </location>
</feature>
<feature type="compositionally biased region" description="Basic and acidic residues" evidence="4">
    <location>
        <begin position="539"/>
        <end position="551"/>
    </location>
</feature>
<feature type="compositionally biased region" description="Polar residues" evidence="4">
    <location>
        <begin position="659"/>
        <end position="676"/>
    </location>
</feature>
<feature type="compositionally biased region" description="Basic and acidic residues" evidence="4">
    <location>
        <begin position="677"/>
        <end position="698"/>
    </location>
</feature>
<feature type="compositionally biased region" description="Basic and acidic residues" evidence="4">
    <location>
        <begin position="1041"/>
        <end position="1060"/>
    </location>
</feature>
<feature type="compositionally biased region" description="Polar residues" evidence="4">
    <location>
        <begin position="1094"/>
        <end position="1110"/>
    </location>
</feature>
<feature type="binding site" evidence="3">
    <location>
        <position position="30"/>
    </location>
    <ligand>
        <name>Mg(2+)</name>
        <dbReference type="ChEBI" id="CHEBI:18420"/>
        <label>1</label>
    </ligand>
</feature>
<feature type="binding site" evidence="3">
    <location>
        <position position="77"/>
    </location>
    <ligand>
        <name>Mg(2+)</name>
        <dbReference type="ChEBI" id="CHEBI:18420"/>
        <label>1</label>
    </ligand>
</feature>
<feature type="binding site" evidence="3">
    <location>
        <position position="788"/>
    </location>
    <ligand>
        <name>Mg(2+)</name>
        <dbReference type="ChEBI" id="CHEBI:18420"/>
        <label>1</label>
    </ligand>
</feature>
<feature type="binding site" evidence="3">
    <location>
        <position position="790"/>
    </location>
    <ligand>
        <name>Mg(2+)</name>
        <dbReference type="ChEBI" id="CHEBI:18420"/>
        <label>1</label>
    </ligand>
</feature>
<feature type="binding site" evidence="3">
    <location>
        <position position="809"/>
    </location>
    <ligand>
        <name>Mg(2+)</name>
        <dbReference type="ChEBI" id="CHEBI:18420"/>
        <label>2</label>
    </ligand>
</feature>
<feature type="binding site" evidence="3">
    <location>
        <position position="811"/>
    </location>
    <ligand>
        <name>Mg(2+)</name>
        <dbReference type="ChEBI" id="CHEBI:18420"/>
        <label>2</label>
    </ligand>
</feature>
<feature type="binding site" evidence="3">
    <location>
        <position position="860"/>
    </location>
    <ligand>
        <name>Mg(2+)</name>
        <dbReference type="ChEBI" id="CHEBI:18420"/>
        <label>2</label>
    </ligand>
</feature>
<feature type="modified residue" description="N6-acetyllysine" evidence="2">
    <location>
        <position position="8"/>
    </location>
</feature>
<feature type="modified residue" description="Phosphoserine" evidence="6 7">
    <location>
        <position position="384"/>
    </location>
</feature>
<feature type="modified residue" description="Phosphoserine" evidence="7">
    <location>
        <position position="704"/>
    </location>
</feature>
<feature type="modified residue" description="Phosphoserine" evidence="7">
    <location>
        <position position="705"/>
    </location>
</feature>
<feature type="sequence conflict" description="In Ref. 2; BAA03813." evidence="5" ref="2">
    <original>C</original>
    <variation>R</variation>
    <location>
        <position position="388"/>
    </location>
</feature>
<feature type="sequence conflict" description="In Ref. 2; BAA03813 and 3; AAA91039/AAB17885." evidence="5" ref="2 3">
    <original>G</original>
    <variation>R</variation>
    <location>
        <position position="419"/>
    </location>
</feature>
<feature type="sequence conflict" description="In Ref. 2; BAA03813 and 3; AAA91039/AAB17885." evidence="5" ref="2 3">
    <original>G</original>
    <variation>E</variation>
    <location>
        <position position="462"/>
    </location>
</feature>
<feature type="sequence conflict" description="In Ref. 2; BAA03813." evidence="5" ref="2">
    <original>R</original>
    <variation>S</variation>
    <location>
        <position position="488"/>
    </location>
</feature>
<feature type="sequence conflict" description="In Ref. 2; BAA03813." evidence="5" ref="2">
    <original>T</original>
    <variation>I</variation>
    <location>
        <position position="688"/>
    </location>
</feature>
<feature type="sequence conflict" description="In Ref. 2; BAA03813 and 3; AAA91039/AAB17885." evidence="5" ref="2 3">
    <original>T</original>
    <variation>S</variation>
    <location>
        <position position="799"/>
    </location>
</feature>
<feature type="sequence conflict" description="In Ref. 2; BAA03813 and 3; AAA91039/AAB17885." evidence="5" ref="2 3">
    <original>ST</original>
    <variation>RE</variation>
    <location>
        <begin position="958"/>
        <end position="959"/>
    </location>
</feature>
<feature type="sequence conflict" description="In Ref. 2; BAA03813." evidence="5" ref="2">
    <original>N</original>
    <variation>S</variation>
    <location>
        <position position="1015"/>
    </location>
</feature>
<feature type="sequence conflict" description="In Ref. 2; BAA03813." evidence="5" ref="2">
    <original>I</original>
    <variation>M</variation>
    <location>
        <position position="1021"/>
    </location>
</feature>
<feature type="sequence conflict" description="In Ref. 2; BAA03813 and 3; AAA91039/AAB17885." evidence="5" ref="2 3">
    <original>S</original>
    <variation>G</variation>
    <location>
        <position position="1110"/>
    </location>
</feature>
<feature type="sequence conflict" description="In Ref. 2; BAA03813." evidence="5" ref="2">
    <original>P</original>
    <variation>S</variation>
    <location>
        <position position="1121"/>
    </location>
</feature>
<feature type="sequence conflict" description="In Ref. 2; BAA03813 and 3; AAA91039/AAB17885." evidence="5" ref="2 3">
    <original>D</original>
    <variation>G</variation>
    <location>
        <position position="1138"/>
    </location>
</feature>
<dbReference type="EC" id="3.1.-.-" evidence="2"/>
<dbReference type="EMBL" id="D16306">
    <property type="protein sequence ID" value="BAA03813.1"/>
    <property type="molecule type" value="mRNA"/>
</dbReference>
<dbReference type="EMBL" id="U40796">
    <property type="protein sequence ID" value="AAA91039.1"/>
    <property type="molecule type" value="mRNA"/>
</dbReference>
<dbReference type="EMBL" id="U40795">
    <property type="protein sequence ID" value="AAB17885.1"/>
    <property type="molecule type" value="Genomic_DNA"/>
</dbReference>
<dbReference type="EMBL" id="U39892">
    <property type="protein sequence ID" value="AAB17885.1"/>
    <property type="status" value="JOINED"/>
    <property type="molecule type" value="Genomic_DNA"/>
</dbReference>
<dbReference type="EMBL" id="U39893">
    <property type="protein sequence ID" value="AAB17885.1"/>
    <property type="status" value="JOINED"/>
    <property type="molecule type" value="Genomic_DNA"/>
</dbReference>
<dbReference type="EMBL" id="U39894">
    <property type="protein sequence ID" value="AAB17885.1"/>
    <property type="status" value="JOINED"/>
    <property type="molecule type" value="Genomic_DNA"/>
</dbReference>
<dbReference type="EMBL" id="U39896">
    <property type="protein sequence ID" value="AAB17885.1"/>
    <property type="status" value="JOINED"/>
    <property type="molecule type" value="Genomic_DNA"/>
</dbReference>
<dbReference type="EMBL" id="U40073">
    <property type="protein sequence ID" value="AAB17885.1"/>
    <property type="status" value="JOINED"/>
    <property type="molecule type" value="Genomic_DNA"/>
</dbReference>
<dbReference type="EMBL" id="U40431">
    <property type="protein sequence ID" value="AAB17885.1"/>
    <property type="status" value="JOINED"/>
    <property type="molecule type" value="Genomic_DNA"/>
</dbReference>
<dbReference type="EMBL" id="U40432">
    <property type="protein sequence ID" value="AAB17885.1"/>
    <property type="status" value="JOINED"/>
    <property type="molecule type" value="Genomic_DNA"/>
</dbReference>
<dbReference type="EMBL" id="U40668">
    <property type="protein sequence ID" value="AAB17885.1"/>
    <property type="status" value="JOINED"/>
    <property type="molecule type" value="Genomic_DNA"/>
</dbReference>
<dbReference type="EMBL" id="U40669">
    <property type="protein sequence ID" value="AAB17885.1"/>
    <property type="status" value="JOINED"/>
    <property type="molecule type" value="Genomic_DNA"/>
</dbReference>
<dbReference type="EMBL" id="U40670">
    <property type="protein sequence ID" value="AAB17885.1"/>
    <property type="status" value="JOINED"/>
    <property type="molecule type" value="Genomic_DNA"/>
</dbReference>
<dbReference type="EMBL" id="U40792">
    <property type="protein sequence ID" value="AAB17885.1"/>
    <property type="status" value="JOINED"/>
    <property type="molecule type" value="Genomic_DNA"/>
</dbReference>
<dbReference type="EMBL" id="U40793">
    <property type="protein sequence ID" value="AAB17885.1"/>
    <property type="status" value="JOINED"/>
    <property type="molecule type" value="Genomic_DNA"/>
</dbReference>
<dbReference type="EMBL" id="U40794">
    <property type="protein sequence ID" value="AAB17885.1"/>
    <property type="status" value="JOINED"/>
    <property type="molecule type" value="Genomic_DNA"/>
</dbReference>
<dbReference type="EMBL" id="AC123800">
    <property type="status" value="NOT_ANNOTATED_CDS"/>
    <property type="molecule type" value="Genomic_DNA"/>
</dbReference>
<dbReference type="CCDS" id="CCDS35553.1"/>
<dbReference type="PIR" id="A57650">
    <property type="entry name" value="A57650"/>
</dbReference>
<dbReference type="SMR" id="P35689"/>
<dbReference type="FunCoup" id="P35689">
    <property type="interactions" value="2217"/>
</dbReference>
<dbReference type="STRING" id="10090.ENSMUSP00000027214"/>
<dbReference type="iPTMnet" id="P35689"/>
<dbReference type="PhosphoSitePlus" id="P35689"/>
<dbReference type="jPOST" id="P35689"/>
<dbReference type="PaxDb" id="10090-ENSMUSP00000027214"/>
<dbReference type="ProteomicsDB" id="275938"/>
<dbReference type="Pumba" id="P35689"/>
<dbReference type="AGR" id="MGI:103582"/>
<dbReference type="MGI" id="MGI:103582">
    <property type="gene designation" value="Ercc5"/>
</dbReference>
<dbReference type="eggNOG" id="KOG2520">
    <property type="taxonomic scope" value="Eukaryota"/>
</dbReference>
<dbReference type="InParanoid" id="P35689"/>
<dbReference type="Reactome" id="R-MMU-5696395">
    <property type="pathway name" value="Formation of Incision Complex in GG-NER"/>
</dbReference>
<dbReference type="Reactome" id="R-MMU-5696400">
    <property type="pathway name" value="Dual Incision in GG-NER"/>
</dbReference>
<dbReference type="Reactome" id="R-MMU-6782135">
    <property type="pathway name" value="Dual incision in TC-NER"/>
</dbReference>
<dbReference type="ChiTaRS" id="Ercc5">
    <property type="organism name" value="mouse"/>
</dbReference>
<dbReference type="PRO" id="PR:P35689"/>
<dbReference type="Proteomes" id="UP000000589">
    <property type="component" value="Unplaced"/>
</dbReference>
<dbReference type="RNAct" id="P35689">
    <property type="molecule type" value="protein"/>
</dbReference>
<dbReference type="GO" id="GO:0005694">
    <property type="term" value="C:chromosome"/>
    <property type="evidence" value="ECO:0007669"/>
    <property type="project" value="UniProtKB-SubCell"/>
</dbReference>
<dbReference type="GO" id="GO:0000109">
    <property type="term" value="C:nucleotide-excision repair complex"/>
    <property type="evidence" value="ECO:0000250"/>
    <property type="project" value="UniProtKB"/>
</dbReference>
<dbReference type="GO" id="GO:0004519">
    <property type="term" value="F:endonuclease activity"/>
    <property type="evidence" value="ECO:0007669"/>
    <property type="project" value="UniProtKB-KW"/>
</dbReference>
<dbReference type="GO" id="GO:0046872">
    <property type="term" value="F:metal ion binding"/>
    <property type="evidence" value="ECO:0007669"/>
    <property type="project" value="UniProtKB-KW"/>
</dbReference>
<dbReference type="GO" id="GO:0044877">
    <property type="term" value="F:protein-containing complex binding"/>
    <property type="evidence" value="ECO:0000250"/>
    <property type="project" value="UniProtKB"/>
</dbReference>
<dbReference type="GO" id="GO:0003697">
    <property type="term" value="F:single-stranded DNA binding"/>
    <property type="evidence" value="ECO:0007669"/>
    <property type="project" value="InterPro"/>
</dbReference>
<dbReference type="GO" id="GO:0008340">
    <property type="term" value="P:determination of adult lifespan"/>
    <property type="evidence" value="ECO:0000315"/>
    <property type="project" value="MGI"/>
</dbReference>
<dbReference type="GO" id="GO:0006281">
    <property type="term" value="P:DNA repair"/>
    <property type="evidence" value="ECO:0000315"/>
    <property type="project" value="MGI"/>
</dbReference>
<dbReference type="GO" id="GO:0035264">
    <property type="term" value="P:multicellular organism growth"/>
    <property type="evidence" value="ECO:0000315"/>
    <property type="project" value="MGI"/>
</dbReference>
<dbReference type="GO" id="GO:0006289">
    <property type="term" value="P:nucleotide-excision repair"/>
    <property type="evidence" value="ECO:0000315"/>
    <property type="project" value="MGI"/>
</dbReference>
<dbReference type="GO" id="GO:0009411">
    <property type="term" value="P:response to UV"/>
    <property type="evidence" value="ECO:0000315"/>
    <property type="project" value="MGI"/>
</dbReference>
<dbReference type="GO" id="GO:0009650">
    <property type="term" value="P:UV protection"/>
    <property type="evidence" value="ECO:0000314"/>
    <property type="project" value="MGI"/>
</dbReference>
<dbReference type="CDD" id="cd09904">
    <property type="entry name" value="H3TH_XPG"/>
    <property type="match status" value="1"/>
</dbReference>
<dbReference type="CDD" id="cd09868">
    <property type="entry name" value="PIN_XPG_RAD2"/>
    <property type="match status" value="2"/>
</dbReference>
<dbReference type="FunFam" id="3.40.50.1010:FF:000023">
    <property type="entry name" value="DNA repair protein complementing XP-G cells"/>
    <property type="match status" value="1"/>
</dbReference>
<dbReference type="FunFam" id="1.10.150.20:FF:000037">
    <property type="entry name" value="DNA repair protein complementing XP-G cells homolog"/>
    <property type="match status" value="1"/>
</dbReference>
<dbReference type="FunFam" id="3.40.50.1010:FF:000022">
    <property type="entry name" value="DNA repair protein complementing XP-G cells homolog"/>
    <property type="match status" value="1"/>
</dbReference>
<dbReference type="Gene3D" id="1.10.150.20">
    <property type="entry name" value="5' to 3' exonuclease, C-terminal subdomain"/>
    <property type="match status" value="1"/>
</dbReference>
<dbReference type="Gene3D" id="3.40.50.1010">
    <property type="entry name" value="5'-nuclease"/>
    <property type="match status" value="2"/>
</dbReference>
<dbReference type="InterPro" id="IPR036279">
    <property type="entry name" value="5-3_exonuclease_C_sf"/>
</dbReference>
<dbReference type="InterPro" id="IPR008918">
    <property type="entry name" value="HhH2"/>
</dbReference>
<dbReference type="InterPro" id="IPR029060">
    <property type="entry name" value="PIN-like_dom_sf"/>
</dbReference>
<dbReference type="InterPro" id="IPR006086">
    <property type="entry name" value="XPG-I_dom"/>
</dbReference>
<dbReference type="InterPro" id="IPR006084">
    <property type="entry name" value="XPG/Rad2"/>
</dbReference>
<dbReference type="InterPro" id="IPR001044">
    <property type="entry name" value="XPG/Rad2_eukaryotes"/>
</dbReference>
<dbReference type="InterPro" id="IPR019974">
    <property type="entry name" value="XPG_CS"/>
</dbReference>
<dbReference type="InterPro" id="IPR006085">
    <property type="entry name" value="XPG_DNA_repair_N"/>
</dbReference>
<dbReference type="NCBIfam" id="TIGR00600">
    <property type="entry name" value="rad2"/>
    <property type="match status" value="1"/>
</dbReference>
<dbReference type="PANTHER" id="PTHR16171:SF11">
    <property type="entry name" value="DNA EXCISION REPAIR PROTEIN ERCC-5"/>
    <property type="match status" value="1"/>
</dbReference>
<dbReference type="PANTHER" id="PTHR16171">
    <property type="entry name" value="DNA REPAIR PROTEIN COMPLEMENTING XP-G CELLS-RELATED"/>
    <property type="match status" value="1"/>
</dbReference>
<dbReference type="Pfam" id="PF00867">
    <property type="entry name" value="XPG_I"/>
    <property type="match status" value="1"/>
</dbReference>
<dbReference type="Pfam" id="PF00752">
    <property type="entry name" value="XPG_N"/>
    <property type="match status" value="1"/>
</dbReference>
<dbReference type="PRINTS" id="PR00853">
    <property type="entry name" value="XPGRADSUPER"/>
</dbReference>
<dbReference type="PRINTS" id="PR00066">
    <property type="entry name" value="XRODRMPGMNTG"/>
</dbReference>
<dbReference type="SMART" id="SM00279">
    <property type="entry name" value="HhH2"/>
    <property type="match status" value="1"/>
</dbReference>
<dbReference type="SMART" id="SM00484">
    <property type="entry name" value="XPGI"/>
    <property type="match status" value="1"/>
</dbReference>
<dbReference type="SMART" id="SM00485">
    <property type="entry name" value="XPGN"/>
    <property type="match status" value="1"/>
</dbReference>
<dbReference type="SUPFAM" id="SSF47807">
    <property type="entry name" value="5' to 3' exonuclease, C-terminal subdomain"/>
    <property type="match status" value="1"/>
</dbReference>
<dbReference type="SUPFAM" id="SSF88723">
    <property type="entry name" value="PIN domain-like"/>
    <property type="match status" value="1"/>
</dbReference>
<dbReference type="PROSITE" id="PS00841">
    <property type="entry name" value="XPG_1"/>
    <property type="match status" value="1"/>
</dbReference>
<dbReference type="PROSITE" id="PS00842">
    <property type="entry name" value="XPG_2"/>
    <property type="match status" value="1"/>
</dbReference>
<evidence type="ECO:0000250" key="1"/>
<evidence type="ECO:0000250" key="2">
    <source>
        <dbReference type="UniProtKB" id="P28715"/>
    </source>
</evidence>
<evidence type="ECO:0000250" key="3">
    <source>
        <dbReference type="UniProtKB" id="P39748"/>
    </source>
</evidence>
<evidence type="ECO:0000256" key="4">
    <source>
        <dbReference type="SAM" id="MobiDB-lite"/>
    </source>
</evidence>
<evidence type="ECO:0000305" key="5"/>
<evidence type="ECO:0007744" key="6">
    <source>
    </source>
</evidence>
<evidence type="ECO:0007744" key="7">
    <source>
    </source>
</evidence>
<keyword id="KW-0007">Acetylation</keyword>
<keyword id="KW-0158">Chromosome</keyword>
<keyword id="KW-0227">DNA damage</keyword>
<keyword id="KW-0234">DNA repair</keyword>
<keyword id="KW-0238">DNA-binding</keyword>
<keyword id="KW-0255">Endonuclease</keyword>
<keyword id="KW-0378">Hydrolase</keyword>
<keyword id="KW-0460">Magnesium</keyword>
<keyword id="KW-0479">Metal-binding</keyword>
<keyword id="KW-0540">Nuclease</keyword>
<keyword id="KW-0539">Nucleus</keyword>
<keyword id="KW-0597">Phosphoprotein</keyword>
<keyword id="KW-1185">Reference proteome</keyword>
<protein>
    <recommendedName>
        <fullName evidence="5">DNA excision repair protein ERCC-5</fullName>
        <ecNumber evidence="2">3.1.-.-</ecNumber>
    </recommendedName>
    <alternativeName>
        <fullName>DNA repair protein complementing XP-G cells homolog</fullName>
    </alternativeName>
    <alternativeName>
        <fullName>Xeroderma pigmentosum group G-complementing protein homolog</fullName>
    </alternativeName>
</protein>
<reference key="1">
    <citation type="journal article" date="1994" name="Mutat. Res.">
        <title>An ERCC5 gene with homology to yeast RAD2 is involved in group G Xeroderma pigmentosum.</title>
        <authorList>
            <person name="Shiomi T."/>
            <person name="Harada Y.-N."/>
            <person name="Saito T."/>
            <person name="Shiomi N."/>
            <person name="Okuno Y."/>
            <person name="Yamaizumi M."/>
        </authorList>
    </citation>
    <scope>NUCLEOTIDE SEQUENCE [MRNA]</scope>
</reference>
<reference key="2">
    <citation type="journal article" date="1995" name="Genomics">
        <title>Complementary DNA sequence and chromosomal localization of xpg, the mouse counterpart of human repair gene XPG/ERCC5.</title>
        <authorList>
            <person name="Harada Y.N."/>
            <person name="Matsuda Y."/>
            <person name="Shiomi N."/>
            <person name="Shiomi T."/>
        </authorList>
    </citation>
    <scope>NUCLEOTIDE SEQUENCE [MRNA]</scope>
    <source>
        <strain>C57BL/10</strain>
        <tissue>Liver</tissue>
    </source>
</reference>
<reference key="3">
    <citation type="journal article" date="1996" name="Mamm. Genome">
        <title>Molecular cloning and structural analysis of the functional mouse genomic XPG gene.</title>
        <authorList>
            <person name="Ludwig D.L."/>
            <person name="Mudgett J.S."/>
            <person name="Park M.S."/>
            <person name="Perez-Castro A.V."/>
            <person name="Macinnes M.A."/>
        </authorList>
    </citation>
    <scope>NUCLEOTIDE SEQUENCE [GENOMIC DNA / MRNA]</scope>
    <source>
        <strain>DBA/2J</strain>
    </source>
</reference>
<reference key="4">
    <citation type="journal article" date="2009" name="PLoS Biol.">
        <title>Lineage-specific biology revealed by a finished genome assembly of the mouse.</title>
        <authorList>
            <person name="Church D.M."/>
            <person name="Goodstadt L."/>
            <person name="Hillier L.W."/>
            <person name="Zody M.C."/>
            <person name="Goldstein S."/>
            <person name="She X."/>
            <person name="Bult C.J."/>
            <person name="Agarwala R."/>
            <person name="Cherry J.L."/>
            <person name="DiCuccio M."/>
            <person name="Hlavina W."/>
            <person name="Kapustin Y."/>
            <person name="Meric P."/>
            <person name="Maglott D."/>
            <person name="Birtle Z."/>
            <person name="Marques A.C."/>
            <person name="Graves T."/>
            <person name="Zhou S."/>
            <person name="Teague B."/>
            <person name="Potamousis K."/>
            <person name="Churas C."/>
            <person name="Place M."/>
            <person name="Herschleb J."/>
            <person name="Runnheim R."/>
            <person name="Forrest D."/>
            <person name="Amos-Landgraf J."/>
            <person name="Schwartz D.C."/>
            <person name="Cheng Z."/>
            <person name="Lindblad-Toh K."/>
            <person name="Eichler E.E."/>
            <person name="Ponting C.P."/>
        </authorList>
    </citation>
    <scope>NUCLEOTIDE SEQUENCE [LARGE SCALE GENOMIC DNA]</scope>
    <source>
        <strain>C57BL/6J</strain>
    </source>
</reference>
<reference key="5">
    <citation type="journal article" date="2007" name="Proc. Natl. Acad. Sci. U.S.A.">
        <title>Large-scale phosphorylation analysis of mouse liver.</title>
        <authorList>
            <person name="Villen J."/>
            <person name="Beausoleil S.A."/>
            <person name="Gerber S.A."/>
            <person name="Gygi S.P."/>
        </authorList>
    </citation>
    <scope>PHOSPHORYLATION [LARGE SCALE ANALYSIS] AT SER-384</scope>
    <scope>IDENTIFICATION BY MASS SPECTROMETRY [LARGE SCALE ANALYSIS]</scope>
    <source>
        <tissue>Liver</tissue>
    </source>
</reference>
<reference key="6">
    <citation type="journal article" date="2010" name="Cell">
        <title>A tissue-specific atlas of mouse protein phosphorylation and expression.</title>
        <authorList>
            <person name="Huttlin E.L."/>
            <person name="Jedrychowski M.P."/>
            <person name="Elias J.E."/>
            <person name="Goswami T."/>
            <person name="Rad R."/>
            <person name="Beausoleil S.A."/>
            <person name="Villen J."/>
            <person name="Haas W."/>
            <person name="Sowa M.E."/>
            <person name="Gygi S.P."/>
        </authorList>
    </citation>
    <scope>PHOSPHORYLATION [LARGE SCALE ANALYSIS] AT SER-384; SER-704 AND SER-705</scope>
    <scope>IDENTIFICATION BY MASS SPECTROMETRY [LARGE SCALE ANALYSIS]</scope>
    <source>
        <tissue>Brain</tissue>
        <tissue>Brown adipose tissue</tissue>
        <tissue>Heart</tissue>
        <tissue>Kidney</tissue>
        <tissue>Liver</tissue>
        <tissue>Lung</tissue>
        <tissue>Pancreas</tissue>
        <tissue>Spleen</tissue>
        <tissue>Testis</tissue>
    </source>
</reference>
<name>ERCC5_MOUSE</name>
<accession>P35689</accession>
<accession>Q61528</accession>
<accession>Q64248</accession>
<sequence length="1170" mass="130715">MGVQGLWKLLECSGHRVSPEALEGKVLAVDISIWLNQALKGVRDSHGNVIENAHLLTLFHRLCKLLFFRIRPIFVFDGDAPLLKKQTLAKRRQRKDSASIDSRKTTEKLLKTFLKRQALKTAFRSSRHEAPPSLTQVQRQDDIYVLPPLPEEEKHSSEEEDEKQWQARMDQKQALQEEFFHNPQAIDIESEDFSSLPPEVKHEILTDMKEFTKRRRTLFEAMPEESNDFSQYQLKGLLKKNYLNQHIENVQKEMNQQHSGQIQRQYQDEGGFLKEVESRRVVSEDTSHYILIKGIQGKKVMDVDSESLPSSSNVHSVSSNLKSSPHEKVKPEREPEAAPPSPRTLLAIQAAMLGSSSEDEPESREGRQSKERNSGATADAGSISPRTCAAIQKALDDDNDEKVSGSSDDLAEKMLLGSGLEQEEHADETAERGGGVPFDTAPLTPSVTEVKECVTSGSSANGQTDSAHSFTTASHRCDTPKETVSLARAVKEASQISSECEVEGRPAALSPAFIGTPSSHVSGVLSEREPTLAPPTTRTHSDQGIDIHPEDPELQNGLYPLETKCNSSRLSSDDETEGGQNPAPKACSTVHVPAEAMSNLENALPSNAEERGDFQETIQLREVPEAAARELISAPKPMGPMEMESEESESDGSFIEVQSVVSNSELQTESSEASTHLSEKDAEEPRETLEEGTSRDTECLLQDSSDIEAMEGHREADIDAEDMPNEWQDINLEELDALESNLLAEQNSLKAQKQQQDRIAASVTGQMFLESQELLRLFGVPYIQAPMEAEAQCAMLDLTDQTSGTITDDSDIWLFGARHVYKNFFNKNKFVEYYQYVDFYSQLGLDRNKLINLAYLLGSDYTEGIPTVGCVTAMEILNEFPGRGLDPLLKFSEWWHEAQNNKKVAENPYDTKVKKKLRKLQLTPGFPNPAVADAYLRPVVDDSRGSFLWGKPDVDKISTFCQRYFGWNRMKTDESLYPVLKHLNAHQTQLRIDSFFRLAQQEKQDAKLIKSHRLNRAVTCILRKEREEKAPELTKVTEALDDAKGKTQKRELPYKKETSVPKRRRPSGNGGFLGDPYCSESPQESSCEDGEGSSVMSARQRSAAESSKISCSDVPDLVRDPPHGRQGCVSTSSSSEDDEDKAKTVLVTARPVFGKKKLKLKSMKRRKKKT</sequence>
<organism>
    <name type="scientific">Mus musculus</name>
    <name type="common">Mouse</name>
    <dbReference type="NCBI Taxonomy" id="10090"/>
    <lineage>
        <taxon>Eukaryota</taxon>
        <taxon>Metazoa</taxon>
        <taxon>Chordata</taxon>
        <taxon>Craniata</taxon>
        <taxon>Vertebrata</taxon>
        <taxon>Euteleostomi</taxon>
        <taxon>Mammalia</taxon>
        <taxon>Eutheria</taxon>
        <taxon>Euarchontoglires</taxon>
        <taxon>Glires</taxon>
        <taxon>Rodentia</taxon>
        <taxon>Myomorpha</taxon>
        <taxon>Muroidea</taxon>
        <taxon>Muridae</taxon>
        <taxon>Murinae</taxon>
        <taxon>Mus</taxon>
        <taxon>Mus</taxon>
    </lineage>
</organism>
<gene>
    <name type="primary">Ercc5</name>
    <name type="synonym">Ercc-5</name>
    <name type="synonym">Xpg</name>
</gene>